<feature type="chain" id="PRO_0000127815" description="Uncharacterized protein AF_0052">
    <location>
        <begin position="1"/>
        <end position="158"/>
    </location>
</feature>
<gene>
    <name type="ordered locus">AF_0052</name>
</gene>
<dbReference type="EMBL" id="AE000782">
    <property type="protein sequence ID" value="AAB91174.1"/>
    <property type="molecule type" value="Genomic_DNA"/>
</dbReference>
<dbReference type="PIR" id="D69256">
    <property type="entry name" value="D69256"/>
</dbReference>
<dbReference type="RefSeq" id="WP_010877566.1">
    <property type="nucleotide sequence ID" value="NC_000917.1"/>
</dbReference>
<dbReference type="PaxDb" id="224325-AF_0052"/>
<dbReference type="EnsemblBacteria" id="AAB91174">
    <property type="protein sequence ID" value="AAB91174"/>
    <property type="gene ID" value="AF_0052"/>
</dbReference>
<dbReference type="KEGG" id="afu:AF_0052"/>
<dbReference type="HOGENOM" id="CLU_1507301_0_0_2"/>
<dbReference type="PhylomeDB" id="O30184"/>
<dbReference type="Proteomes" id="UP000002199">
    <property type="component" value="Chromosome"/>
</dbReference>
<protein>
    <recommendedName>
        <fullName>Uncharacterized protein AF_0052</fullName>
    </recommendedName>
</protein>
<reference key="1">
    <citation type="journal article" date="1997" name="Nature">
        <title>The complete genome sequence of the hyperthermophilic, sulphate-reducing archaeon Archaeoglobus fulgidus.</title>
        <authorList>
            <person name="Klenk H.-P."/>
            <person name="Clayton R.A."/>
            <person name="Tomb J.-F."/>
            <person name="White O."/>
            <person name="Nelson K.E."/>
            <person name="Ketchum K.A."/>
            <person name="Dodson R.J."/>
            <person name="Gwinn M.L."/>
            <person name="Hickey E.K."/>
            <person name="Peterson J.D."/>
            <person name="Richardson D.L."/>
            <person name="Kerlavage A.R."/>
            <person name="Graham D.E."/>
            <person name="Kyrpides N.C."/>
            <person name="Fleischmann R.D."/>
            <person name="Quackenbush J."/>
            <person name="Lee N.H."/>
            <person name="Sutton G.G."/>
            <person name="Gill S.R."/>
            <person name="Kirkness E.F."/>
            <person name="Dougherty B.A."/>
            <person name="McKenney K."/>
            <person name="Adams M.D."/>
            <person name="Loftus B.J."/>
            <person name="Peterson S.N."/>
            <person name="Reich C.I."/>
            <person name="McNeil L.K."/>
            <person name="Badger J.H."/>
            <person name="Glodek A."/>
            <person name="Zhou L."/>
            <person name="Overbeek R."/>
            <person name="Gocayne J.D."/>
            <person name="Weidman J.F."/>
            <person name="McDonald L.A."/>
            <person name="Utterback T.R."/>
            <person name="Cotton M.D."/>
            <person name="Spriggs T."/>
            <person name="Artiach P."/>
            <person name="Kaine B.P."/>
            <person name="Sykes S.M."/>
            <person name="Sadow P.W."/>
            <person name="D'Andrea K.P."/>
            <person name="Bowman C."/>
            <person name="Fujii C."/>
            <person name="Garland S.A."/>
            <person name="Mason T.M."/>
            <person name="Olsen G.J."/>
            <person name="Fraser C.M."/>
            <person name="Smith H.O."/>
            <person name="Woese C.R."/>
            <person name="Venter J.C."/>
        </authorList>
    </citation>
    <scope>NUCLEOTIDE SEQUENCE [LARGE SCALE GENOMIC DNA]</scope>
    <source>
        <strain>ATCC 49558 / DSM 4304 / JCM 9628 / NBRC 100126 / VC-16</strain>
    </source>
</reference>
<name>Y052_ARCFU</name>
<proteinExistence type="predicted"/>
<keyword id="KW-1185">Reference proteome</keyword>
<accession>O30184</accession>
<sequence length="158" mass="17369">MAVSIEEFSRIIIATLDLNFQILENFFTLLVVSATNSSLVSQGANLNFSNVWGLIYGGLVSNYWNSFAIHEVLNATQHNVSAMKNFSIAINYLGSNATTVFGDAEGTKGVTYLQKGIYDYLKSNPQEAENLASSLSRMFKAEVEFLIKLMGAVNTTFT</sequence>
<organism>
    <name type="scientific">Archaeoglobus fulgidus (strain ATCC 49558 / DSM 4304 / JCM 9628 / NBRC 100126 / VC-16)</name>
    <dbReference type="NCBI Taxonomy" id="224325"/>
    <lineage>
        <taxon>Archaea</taxon>
        <taxon>Methanobacteriati</taxon>
        <taxon>Methanobacteriota</taxon>
        <taxon>Archaeoglobi</taxon>
        <taxon>Archaeoglobales</taxon>
        <taxon>Archaeoglobaceae</taxon>
        <taxon>Archaeoglobus</taxon>
    </lineage>
</organism>